<keyword id="KW-0029">Amino-acid transport</keyword>
<keyword id="KW-1003">Cell membrane</keyword>
<keyword id="KW-0903">Direct protein sequencing</keyword>
<keyword id="KW-0325">Glycoprotein</keyword>
<keyword id="KW-0472">Membrane</keyword>
<keyword id="KW-1267">Proteomics identification</keyword>
<keyword id="KW-0675">Receptor</keyword>
<keyword id="KW-1185">Reference proteome</keyword>
<keyword id="KW-0812">Transmembrane</keyword>
<keyword id="KW-1133">Transmembrane helix</keyword>
<keyword id="KW-0813">Transport</keyword>
<name>CTR1_HUMAN</name>
<comment type="function">
    <text evidence="3 7">High-affinity, low capacity permease involved in the transport of the cationic amino acids (arginine, lysine and ornithine) in non-hepatic tissues.</text>
</comment>
<comment type="catalytic activity">
    <reaction evidence="7">
        <text>L-arginine(in) = L-arginine(out)</text>
        <dbReference type="Rhea" id="RHEA:32143"/>
        <dbReference type="ChEBI" id="CHEBI:32682"/>
    </reaction>
</comment>
<comment type="catalytic activity">
    <reaction evidence="3">
        <text>L-lysine(in) = L-lysine(out)</text>
        <dbReference type="Rhea" id="RHEA:70935"/>
        <dbReference type="ChEBI" id="CHEBI:32551"/>
    </reaction>
</comment>
<comment type="catalytic activity">
    <reaction evidence="1">
        <text>L-ornithine(in) = L-ornithine(out)</text>
        <dbReference type="Rhea" id="RHEA:71199"/>
        <dbReference type="ChEBI" id="CHEBI:46911"/>
    </reaction>
</comment>
<comment type="catalytic activity">
    <reaction evidence="1">
        <text>L-homoarginine(in) = L-homoarginine(out)</text>
        <dbReference type="Rhea" id="RHEA:71203"/>
        <dbReference type="ChEBI" id="CHEBI:143006"/>
    </reaction>
</comment>
<comment type="biophysicochemical properties">
    <kinetics>
        <KM evidence="7">0.11 mM for L-arginine</KM>
        <KM evidence="3">98 uM for L-lysine</KM>
    </kinetics>
    <phDependence>
        <text evidence="7">Optimum pH is 5.5-8.5.</text>
    </phDependence>
</comment>
<comment type="subunit">
    <text evidence="1 6">Interacts with TM4SF5; the interaction is negatively regulated by arginine (PubMed:30956113). Forms tissue-specific complexes with ASL, ASS1 and nitric oxide synthase NOS1 or NOS3; the complex regulates cell-autonomous L-arginine synthesis and citrulline recycling while channeling extracellular L-arginine to nitric oxide synthesis pathway (By similarity).</text>
</comment>
<comment type="interaction">
    <interactant intactId="EBI-4289564">
        <id>P30825</id>
    </interactant>
    <interactant intactId="EBI-2682765">
        <id>O60242</id>
        <label>ADGRB3</label>
    </interactant>
    <organismsDiffer>false</organismsDiffer>
    <experiments>3</experiments>
</comment>
<comment type="interaction">
    <interactant intactId="EBI-4289564">
        <id>P30825</id>
    </interactant>
    <interactant intactId="EBI-1171525">
        <id>P02652</id>
        <label>APOA2</label>
    </interactant>
    <organismsDiffer>false</organismsDiffer>
    <experiments>3</experiments>
</comment>
<comment type="interaction">
    <interactant intactId="EBI-4289564">
        <id>P30825</id>
    </interactant>
    <interactant intactId="EBI-13059134">
        <id>Q13520</id>
        <label>AQP6</label>
    </interactant>
    <organismsDiffer>false</organismsDiffer>
    <experiments>3</experiments>
</comment>
<comment type="interaction">
    <interactant intactId="EBI-4289564">
        <id>P30825</id>
    </interactant>
    <interactant intactId="EBI-721179">
        <id>P27449</id>
        <label>ATP6V0C</label>
    </interactant>
    <organismsDiffer>false</organismsDiffer>
    <experiments>3</experiments>
</comment>
<comment type="interaction">
    <interactant intactId="EBI-4289564">
        <id>P30825</id>
    </interactant>
    <interactant intactId="EBI-9021639">
        <id>P07357</id>
        <label>C8A</label>
    </interactant>
    <organismsDiffer>false</organismsDiffer>
    <experiments>3</experiments>
</comment>
<comment type="interaction">
    <interactant intactId="EBI-4289564">
        <id>P30825</id>
    </interactant>
    <interactant intactId="EBI-3953638">
        <id>P27352</id>
        <label>CBLIF</label>
    </interactant>
    <organismsDiffer>false</organismsDiffer>
    <experiments>3</experiments>
</comment>
<comment type="interaction">
    <interactant intactId="EBI-4289564">
        <id>P30825</id>
    </interactant>
    <interactant intactId="EBI-2873970">
        <id>P13236</id>
        <label>CCL4</label>
    </interactant>
    <organismsDiffer>false</organismsDiffer>
    <experiments>3</experiments>
</comment>
<comment type="interaction">
    <interactant intactId="EBI-4289564">
        <id>P30825</id>
    </interactant>
    <interactant intactId="EBI-10271156">
        <id>Q8NHW4</id>
        <label>CCL4L2</label>
    </interactant>
    <organismsDiffer>false</organismsDiffer>
    <experiments>3</experiments>
</comment>
<comment type="interaction">
    <interactant intactId="EBI-4289564">
        <id>P30825</id>
    </interactant>
    <interactant intactId="EBI-525714">
        <id>P25942</id>
        <label>CD40</label>
    </interactant>
    <organismsDiffer>false</organismsDiffer>
    <experiments>3</experiments>
</comment>
<comment type="interaction">
    <interactant intactId="EBI-4289564">
        <id>P30825</id>
    </interactant>
    <interactant intactId="EBI-7797864">
        <id>P11912</id>
        <label>CD79A</label>
    </interactant>
    <organismsDiffer>false</organismsDiffer>
    <experiments>3</experiments>
</comment>
<comment type="interaction">
    <interactant intactId="EBI-4289564">
        <id>P30825</id>
    </interactant>
    <interactant intactId="EBI-358858">
        <id>O14735</id>
        <label>CDIPT</label>
    </interactant>
    <organismsDiffer>false</organismsDiffer>
    <experiments>3</experiments>
</comment>
<comment type="interaction">
    <interactant intactId="EBI-4289564">
        <id>P30825</id>
    </interactant>
    <interactant intactId="EBI-2622997">
        <id>Q9HA82</id>
        <label>CERS4</label>
    </interactant>
    <organismsDiffer>false</organismsDiffer>
    <experiments>3</experiments>
</comment>
<comment type="interaction">
    <interactant intactId="EBI-4289564">
        <id>P30825</id>
    </interactant>
    <interactant intactId="EBI-2339374">
        <id>Q8TAZ6</id>
        <label>CMTM2</label>
    </interactant>
    <organismsDiffer>false</organismsDiffer>
    <experiments>3</experiments>
</comment>
<comment type="interaction">
    <interactant intactId="EBI-4289564">
        <id>P30825</id>
    </interactant>
    <interactant intactId="EBI-372265">
        <id>P21964</id>
        <label>COMT</label>
    </interactant>
    <organismsDiffer>false</organismsDiffer>
    <experiments>3</experiments>
</comment>
<comment type="interaction">
    <interactant intactId="EBI-4289564">
        <id>P30825</id>
    </interactant>
    <interactant intactId="EBI-6942903">
        <id>Q96BA8</id>
        <label>CREB3L1</label>
    </interactant>
    <organismsDiffer>false</organismsDiffer>
    <experiments>5</experiments>
</comment>
<comment type="interaction">
    <interactant intactId="EBI-4289564">
        <id>P30825</id>
    </interactant>
    <interactant intactId="EBI-2820492">
        <id>Q9BV81</id>
        <label>EMC6</label>
    </interactant>
    <organismsDiffer>false</organismsDiffer>
    <experiments>3</experiments>
</comment>
<comment type="interaction">
    <interactant intactId="EBI-4289564">
        <id>P30825</id>
    </interactant>
    <interactant intactId="EBI-12118888">
        <id>Q96D05-2</id>
        <label>FAM241B</label>
    </interactant>
    <organismsDiffer>false</organismsDiffer>
    <experiments>3</experiments>
</comment>
<comment type="interaction">
    <interactant intactId="EBI-4289564">
        <id>P30825</id>
    </interactant>
    <interactant intactId="EBI-743099">
        <id>Q969F0</id>
        <label>FATE1</label>
    </interactant>
    <organismsDiffer>false</organismsDiffer>
    <experiments>6</experiments>
</comment>
<comment type="interaction">
    <interactant intactId="EBI-4289564">
        <id>P30825</id>
    </interactant>
    <interactant intactId="EBI-3925203">
        <id>Q8N3T1</id>
        <label>GALNT15</label>
    </interactant>
    <organismsDiffer>false</organismsDiffer>
    <experiments>3</experiments>
</comment>
<comment type="interaction">
    <interactant intactId="EBI-4289564">
        <id>P30825</id>
    </interactant>
    <interactant intactId="EBI-18908258">
        <id>O00258</id>
        <label>GET1</label>
    </interactant>
    <organismsDiffer>false</organismsDiffer>
    <experiments>3</experiments>
</comment>
<comment type="interaction">
    <interactant intactId="EBI-4289564">
        <id>P30825</id>
    </interactant>
    <interactant intactId="EBI-989638">
        <id>P16278</id>
        <label>GLB1</label>
    </interactant>
    <organismsDiffer>false</organismsDiffer>
    <experiments>3</experiments>
</comment>
<comment type="interaction">
    <interactant intactId="EBI-4289564">
        <id>P30825</id>
    </interactant>
    <interactant intactId="EBI-13345167">
        <id>Q8TDT2</id>
        <label>GPR152</label>
    </interactant>
    <organismsDiffer>false</organismsDiffer>
    <experiments>3</experiments>
</comment>
<comment type="interaction">
    <interactant intactId="EBI-4289564">
        <id>P30825</id>
    </interactant>
    <interactant intactId="EBI-2868124">
        <id>Q9BSE4</id>
        <label>HERPUD2</label>
    </interactant>
    <organismsDiffer>false</organismsDiffer>
    <experiments>3</experiments>
</comment>
<comment type="interaction">
    <interactant intactId="EBI-4289564">
        <id>P30825</id>
    </interactant>
    <interactant intactId="EBI-15672507">
        <id>O15243</id>
        <label>LEPROT</label>
    </interactant>
    <organismsDiffer>false</organismsDiffer>
    <experiments>3</experiments>
</comment>
<comment type="interaction">
    <interactant intactId="EBI-4289564">
        <id>P30825</id>
    </interactant>
    <interactant intactId="EBI-750776">
        <id>O95214</id>
        <label>LEPROTL1</label>
    </interactant>
    <organismsDiffer>false</organismsDiffer>
    <experiments>3</experiments>
</comment>
<comment type="interaction">
    <interactant intactId="EBI-4289564">
        <id>P30825</id>
    </interactant>
    <interactant intactId="EBI-11956541">
        <id>Q9GZY8-5</id>
        <label>MFF</label>
    </interactant>
    <organismsDiffer>false</organismsDiffer>
    <experiments>3</experiments>
</comment>
<comment type="interaction">
    <interactant intactId="EBI-4289564">
        <id>P30825</id>
    </interactant>
    <interactant intactId="EBI-724754">
        <id>O14880</id>
        <label>MGST3</label>
    </interactant>
    <organismsDiffer>false</organismsDiffer>
    <experiments>3</experiments>
</comment>
<comment type="interaction">
    <interactant intactId="EBI-4289564">
        <id>P30825</id>
    </interactant>
    <interactant intactId="EBI-12070086">
        <id>Q5J8X5</id>
        <label>MS4A13</label>
    </interactant>
    <organismsDiffer>false</organismsDiffer>
    <experiments>3</experiments>
</comment>
<comment type="interaction">
    <interactant intactId="EBI-4289564">
        <id>P30825</id>
    </interactant>
    <interactant intactId="EBI-721750">
        <id>Q8N138</id>
        <label>ORMDL3</label>
    </interactant>
    <organismsDiffer>false</organismsDiffer>
    <experiments>3</experiments>
</comment>
<comment type="interaction">
    <interactant intactId="EBI-4289564">
        <id>P30825</id>
    </interactant>
    <interactant intactId="EBI-16427978">
        <id>Q9BQ51</id>
        <label>PDCD1LG2</label>
    </interactant>
    <organismsDiffer>false</organismsDiffer>
    <experiments>3</experiments>
</comment>
<comment type="interaction">
    <interactant intactId="EBI-4289564">
        <id>P30825</id>
    </interactant>
    <interactant intactId="EBI-8652812">
        <id>P54315</id>
        <label>PNLIPRP1</label>
    </interactant>
    <organismsDiffer>false</organismsDiffer>
    <experiments>3</experiments>
</comment>
<comment type="interaction">
    <interactant intactId="EBI-4289564">
        <id>P30825</id>
    </interactant>
    <interactant intactId="EBI-742898">
        <id>P43378</id>
        <label>PTPN9</label>
    </interactant>
    <organismsDiffer>false</organismsDiffer>
    <experiments>3</experiments>
</comment>
<comment type="interaction">
    <interactant intactId="EBI-4289564">
        <id>P30825</id>
    </interactant>
    <interactant intactId="EBI-2340657">
        <id>P50876</id>
        <label>RNF144A</label>
    </interactant>
    <organismsDiffer>false</organismsDiffer>
    <experiments>3</experiments>
</comment>
<comment type="interaction">
    <interactant intactId="EBI-4289564">
        <id>P30825</id>
    </interactant>
    <interactant intactId="EBI-3917235">
        <id>Q9NTJ5</id>
        <label>SACM1L</label>
    </interactant>
    <organismsDiffer>false</organismsDiffer>
    <experiments>3</experiments>
</comment>
<comment type="interaction">
    <interactant intactId="EBI-4289564">
        <id>P30825</id>
    </interactant>
    <interactant intactId="EBI-17247926">
        <id>Q9NY72</id>
        <label>SCN3B</label>
    </interactant>
    <organismsDiffer>false</organismsDiffer>
    <experiments>3</experiments>
</comment>
<comment type="interaction">
    <interactant intactId="EBI-4289564">
        <id>P30825</id>
    </interactant>
    <interactant intactId="EBI-81088">
        <id>Q15436</id>
        <label>SEC23A</label>
    </interactant>
    <organismsDiffer>false</organismsDiffer>
    <experiments>3</experiments>
</comment>
<comment type="interaction">
    <interactant intactId="EBI-4289564">
        <id>P30825</id>
    </interactant>
    <interactant intactId="EBI-18159983">
        <id>Q3KNW5</id>
        <label>SLC10A6</label>
    </interactant>
    <organismsDiffer>false</organismsDiffer>
    <experiments>3</experiments>
</comment>
<comment type="interaction">
    <interactant intactId="EBI-4289564">
        <id>P30825</id>
    </interactant>
    <interactant intactId="EBI-18036244">
        <id>Q05940</id>
        <label>SLC18A2</label>
    </interactant>
    <organismsDiffer>false</organismsDiffer>
    <experiments>3</experiments>
</comment>
<comment type="interaction">
    <interactant intactId="EBI-4289564">
        <id>P30825</id>
    </interactant>
    <interactant intactId="EBI-8644112">
        <id>Q9BRI3</id>
        <label>SLC30A2</label>
    </interactant>
    <organismsDiffer>false</organismsDiffer>
    <experiments>3</experiments>
</comment>
<comment type="interaction">
    <interactant intactId="EBI-4289564">
        <id>P30825</id>
    </interactant>
    <interactant intactId="EBI-12898013">
        <id>Q9NP94</id>
        <label>SLC39A2</label>
    </interactant>
    <organismsDiffer>false</organismsDiffer>
    <experiments>3</experiments>
</comment>
<comment type="interaction">
    <interactant intactId="EBI-4289564">
        <id>P30825</id>
    </interactant>
    <interactant intactId="EBI-2823239">
        <id>Q9NUM3</id>
        <label>SLC39A9</label>
    </interactant>
    <organismsDiffer>false</organismsDiffer>
    <experiments>3</experiments>
</comment>
<comment type="interaction">
    <interactant intactId="EBI-4289564">
        <id>P30825</id>
    </interactant>
    <interactant intactId="EBI-12904614">
        <id>Q9NWF4</id>
        <label>SLC52A1</label>
    </interactant>
    <organismsDiffer>false</organismsDiffer>
    <experiments>3</experiments>
</comment>
<comment type="interaction">
    <interactant intactId="EBI-4289564">
        <id>P30825</id>
    </interactant>
    <interactant intactId="EBI-8640191">
        <id>Q9NRQ5</id>
        <label>SMCO4</label>
    </interactant>
    <organismsDiffer>false</organismsDiffer>
    <experiments>3</experiments>
</comment>
<comment type="interaction">
    <interactant intactId="EBI-4289564">
        <id>P30825</id>
    </interactant>
    <interactant intactId="EBI-12908338">
        <id>Q96JF0-2</id>
        <label>ST6GAL2</label>
    </interactant>
    <organismsDiffer>false</organismsDiffer>
    <experiments>3</experiments>
</comment>
<comment type="interaction">
    <interactant intactId="EBI-4289564">
        <id>P30825</id>
    </interactant>
    <interactant intactId="EBI-448878">
        <id>Q13586</id>
        <label>STIM1</label>
    </interactant>
    <organismsDiffer>false</organismsDiffer>
    <experiments>3</experiments>
</comment>
<comment type="interaction">
    <interactant intactId="EBI-4289564">
        <id>P30825</id>
    </interactant>
    <interactant intactId="EBI-1045825">
        <id>P55061</id>
        <label>TMBIM6</label>
    </interactant>
    <organismsDiffer>false</organismsDiffer>
    <experiments>3</experiments>
</comment>
<comment type="interaction">
    <interactant intactId="EBI-4289564">
        <id>P30825</id>
    </interactant>
    <interactant intactId="EBI-2800360">
        <id>Q9Y6G1</id>
        <label>TMEM14A</label>
    </interactant>
    <organismsDiffer>false</organismsDiffer>
    <experiments>3</experiments>
</comment>
<comment type="interaction">
    <interactant intactId="EBI-4289564">
        <id>P30825</id>
    </interactant>
    <interactant intactId="EBI-741829">
        <id>Q96HH6</id>
        <label>TMEM19</label>
    </interactant>
    <organismsDiffer>false</organismsDiffer>
    <experiments>3</experiments>
</comment>
<comment type="interaction">
    <interactant intactId="EBI-4289564">
        <id>P30825</id>
    </interactant>
    <interactant intactId="EBI-10982110">
        <id>Q96Q45-2</id>
        <label>TMEM237</label>
    </interactant>
    <organismsDiffer>false</organismsDiffer>
    <experiments>3</experiments>
</comment>
<comment type="interaction">
    <interactant intactId="EBI-4289564">
        <id>P30825</id>
    </interactant>
    <interactant intactId="EBI-12195249">
        <id>Q5TGU0</id>
        <label>TSPO2</label>
    </interactant>
    <organismsDiffer>false</organismsDiffer>
    <experiments>3</experiments>
</comment>
<comment type="interaction">
    <interactant intactId="EBI-4289564">
        <id>P30825</id>
    </interactant>
    <interactant intactId="EBI-11988865">
        <id>A5PKU2</id>
        <label>TUSC5</label>
    </interactant>
    <organismsDiffer>false</organismsDiffer>
    <experiments>3</experiments>
</comment>
<comment type="interaction">
    <interactant intactId="EBI-4289564">
        <id>P30825</id>
    </interactant>
    <interactant intactId="EBI-751253">
        <id>Q9BSR8</id>
        <label>YIPF4</label>
    </interactant>
    <organismsDiffer>false</organismsDiffer>
    <experiments>4</experiments>
</comment>
<comment type="subcellular location">
    <subcellularLocation>
        <location evidence="1">Cell membrane</location>
        <topology evidence="2">Multi-pass membrane protein</topology>
    </subcellularLocation>
</comment>
<comment type="tissue specificity">
    <text evidence="4">Ubiquitous.</text>
</comment>
<comment type="similarity">
    <text evidence="10">Belongs to the amino acid-polyamine-organocation (APC) superfamily. Cationic amino acid transporter (CAT) (TC 2.A.3.3) family.</text>
</comment>
<accession>P30825</accession>
<accession>Q5JR50</accession>
<sequence>MGCKVLLNIGQQMLRRKVVDCSREETRLSRCLNTFDLVALGVGSTLGAGVYVLAGAVARENAGPAIVISFLIAALASVLAGLCYGEFGARVPKTGSAYLYSYVTVGELWAFITGWNLILSYIIGTSSVARAWSATFDELIGRPIGEFSRTHMTLNAPGVLAENPDIFAVIIILILTGLLTLGVKESAMVNKIFTCINVLVLGFIMVSGFVKGSVKNWQLTEEDFGNTSGRLCLNNDTKEGKPGVGGFMPFGFSGVLSGAATCFYAFVGFDCIATTGEEVKNPQKAIPVGIVASLLICFIAYFGVSAALTLMMPYFCLDNNSPLPDAFKHVGWEGAKYAVAVGSLCALSASLLGSMFPMPRVIYAMAEDGLLFKFLANVNDRTKTPIIATLASGAVAAVMAFLFDLKDLVDLMSIGTLLAYSLVAACVLVLRYQPEQPNLVYQMASTSDELDPADQNELASTNDSQLGFLPEAEMFSLKTILSPKNMEPSKISGLIVNISTSLIAVLIITFCIVTVLGREALTKGALWAVFLLAGSALLCAVVTGVIWRQPESKTKLSFKVPFLPVLPILSIFVNVYLMMQLDQGTWVRFAVWMLIGFIIYFGYGLWHSEEASLDADQARTPDGNLDQCK</sequence>
<dbReference type="EMBL" id="X59155">
    <property type="protein sequence ID" value="CAA41869.1"/>
    <property type="molecule type" value="mRNA"/>
</dbReference>
<dbReference type="EMBL" id="X57303">
    <property type="protein sequence ID" value="CAA40560.1"/>
    <property type="molecule type" value="mRNA"/>
</dbReference>
<dbReference type="EMBL" id="AF078107">
    <property type="protein sequence ID" value="AAC27721.1"/>
    <property type="molecule type" value="mRNA"/>
</dbReference>
<dbReference type="EMBL" id="AL596114">
    <property type="status" value="NOT_ANNOTATED_CDS"/>
    <property type="molecule type" value="Genomic_DNA"/>
</dbReference>
<dbReference type="EMBL" id="BC063303">
    <property type="protein sequence ID" value="AAH63303.1"/>
    <property type="molecule type" value="mRNA"/>
</dbReference>
<dbReference type="EMBL" id="BC069358">
    <property type="protein sequence ID" value="AAH69358.1"/>
    <property type="molecule type" value="mRNA"/>
</dbReference>
<dbReference type="EMBL" id="BC115407">
    <property type="protein sequence ID" value="AAI15408.1"/>
    <property type="molecule type" value="mRNA"/>
</dbReference>
<dbReference type="CCDS" id="CCDS9333.1"/>
<dbReference type="PIR" id="S29685">
    <property type="entry name" value="S29685"/>
</dbReference>
<dbReference type="RefSeq" id="NP_003036.1">
    <property type="nucleotide sequence ID" value="NM_003045.5"/>
</dbReference>
<dbReference type="RefSeq" id="XP_005266564.1">
    <property type="nucleotide sequence ID" value="XM_005266507.4"/>
</dbReference>
<dbReference type="RefSeq" id="XP_016876205.1">
    <property type="nucleotide sequence ID" value="XM_017020716.1"/>
</dbReference>
<dbReference type="RefSeq" id="XP_047286506.1">
    <property type="nucleotide sequence ID" value="XM_047430550.1"/>
</dbReference>
<dbReference type="RefSeq" id="XP_047286507.1">
    <property type="nucleotide sequence ID" value="XM_047430551.1"/>
</dbReference>
<dbReference type="RefSeq" id="XP_047286508.1">
    <property type="nucleotide sequence ID" value="XM_047430552.1"/>
</dbReference>
<dbReference type="RefSeq" id="XP_054230852.1">
    <property type="nucleotide sequence ID" value="XM_054374877.1"/>
</dbReference>
<dbReference type="RefSeq" id="XP_054230853.1">
    <property type="nucleotide sequence ID" value="XM_054374878.1"/>
</dbReference>
<dbReference type="RefSeq" id="XP_054230854.1">
    <property type="nucleotide sequence ID" value="XM_054374879.1"/>
</dbReference>
<dbReference type="RefSeq" id="XP_054230855.1">
    <property type="nucleotide sequence ID" value="XM_054374880.1"/>
</dbReference>
<dbReference type="SMR" id="P30825"/>
<dbReference type="BioGRID" id="112432">
    <property type="interactions" value="300"/>
</dbReference>
<dbReference type="FunCoup" id="P30825">
    <property type="interactions" value="74"/>
</dbReference>
<dbReference type="IntAct" id="P30825">
    <property type="interactions" value="138"/>
</dbReference>
<dbReference type="MINT" id="P30825"/>
<dbReference type="STRING" id="9606.ENSP00000370128"/>
<dbReference type="DrugBank" id="DB00125">
    <property type="generic name" value="Arginine"/>
</dbReference>
<dbReference type="DrugBank" id="DB00123">
    <property type="generic name" value="Lysine"/>
</dbReference>
<dbReference type="DrugBank" id="DB00129">
    <property type="generic name" value="Ornithine"/>
</dbReference>
<dbReference type="TCDB" id="2.A.3.3.9">
    <property type="family name" value="the amino acid-polyamine-organocation (apc) family"/>
</dbReference>
<dbReference type="GlyConnect" id="1314">
    <property type="glycosylation" value="1 N-Linked glycan (1 site)"/>
</dbReference>
<dbReference type="GlyCosmos" id="P30825">
    <property type="glycosylation" value="2 sites, 1 glycan"/>
</dbReference>
<dbReference type="GlyGen" id="P30825">
    <property type="glycosylation" value="4 sites, 11 N-linked glycans (2 sites), 1 O-linked glycan (1 site)"/>
</dbReference>
<dbReference type="iPTMnet" id="P30825"/>
<dbReference type="PhosphoSitePlus" id="P30825"/>
<dbReference type="SwissPalm" id="P30825"/>
<dbReference type="BioMuta" id="SLC7A1"/>
<dbReference type="DMDM" id="1706185"/>
<dbReference type="jPOST" id="P30825"/>
<dbReference type="MassIVE" id="P30825"/>
<dbReference type="PaxDb" id="9606-ENSP00000370128"/>
<dbReference type="PeptideAtlas" id="P30825"/>
<dbReference type="ProteomicsDB" id="54739"/>
<dbReference type="Pumba" id="P30825"/>
<dbReference type="Antibodypedia" id="22734">
    <property type="antibodies" value="189 antibodies from 27 providers"/>
</dbReference>
<dbReference type="DNASU" id="6541"/>
<dbReference type="Ensembl" id="ENST00000380752.10">
    <property type="protein sequence ID" value="ENSP00000370128.5"/>
    <property type="gene ID" value="ENSG00000139514.13"/>
</dbReference>
<dbReference type="GeneID" id="6541"/>
<dbReference type="KEGG" id="hsa:6541"/>
<dbReference type="MANE-Select" id="ENST00000380752.10">
    <property type="protein sequence ID" value="ENSP00000370128.5"/>
    <property type="RefSeq nucleotide sequence ID" value="NM_003045.5"/>
    <property type="RefSeq protein sequence ID" value="NP_003036.1"/>
</dbReference>
<dbReference type="UCSC" id="uc001uso.4">
    <property type="organism name" value="human"/>
</dbReference>
<dbReference type="AGR" id="HGNC:11057"/>
<dbReference type="CTD" id="6541"/>
<dbReference type="DisGeNET" id="6541"/>
<dbReference type="GeneCards" id="SLC7A1"/>
<dbReference type="HGNC" id="HGNC:11057">
    <property type="gene designation" value="SLC7A1"/>
</dbReference>
<dbReference type="HPA" id="ENSG00000139514">
    <property type="expression patterns" value="Tissue enhanced (esophagus)"/>
</dbReference>
<dbReference type="MIM" id="104615">
    <property type="type" value="gene"/>
</dbReference>
<dbReference type="neXtProt" id="NX_P30825"/>
<dbReference type="OpenTargets" id="ENSG00000139514"/>
<dbReference type="PharmGKB" id="PA35917"/>
<dbReference type="VEuPathDB" id="HostDB:ENSG00000139514"/>
<dbReference type="eggNOG" id="KOG1286">
    <property type="taxonomic scope" value="Eukaryota"/>
</dbReference>
<dbReference type="GeneTree" id="ENSGT00940000155349"/>
<dbReference type="HOGENOM" id="CLU_007946_15_7_1"/>
<dbReference type="InParanoid" id="P30825"/>
<dbReference type="OMA" id="TLGWPHL"/>
<dbReference type="OrthoDB" id="3900342at2759"/>
<dbReference type="PAN-GO" id="P30825">
    <property type="GO annotations" value="5 GO annotations based on evolutionary models"/>
</dbReference>
<dbReference type="PhylomeDB" id="P30825"/>
<dbReference type="TreeFam" id="TF315212"/>
<dbReference type="PathwayCommons" id="P30825"/>
<dbReference type="Reactome" id="R-HSA-352230">
    <property type="pathway name" value="Amino acid transport across the plasma membrane"/>
</dbReference>
<dbReference type="SignaLink" id="P30825"/>
<dbReference type="BioGRID-ORCS" id="6541">
    <property type="hits" value="150 hits in 1176 CRISPR screens"/>
</dbReference>
<dbReference type="ChiTaRS" id="SLC7A1">
    <property type="organism name" value="human"/>
</dbReference>
<dbReference type="GeneWiki" id="SLC7A1"/>
<dbReference type="GenomeRNAi" id="6541"/>
<dbReference type="Pharos" id="P30825">
    <property type="development level" value="Tbio"/>
</dbReference>
<dbReference type="PRO" id="PR:P30825"/>
<dbReference type="Proteomes" id="UP000005640">
    <property type="component" value="Chromosome 13"/>
</dbReference>
<dbReference type="RNAct" id="P30825">
    <property type="molecule type" value="protein"/>
</dbReference>
<dbReference type="Bgee" id="ENSG00000139514">
    <property type="expression patterns" value="Expressed in tongue squamous epithelium and 208 other cell types or tissues"/>
</dbReference>
<dbReference type="ExpressionAtlas" id="P30825">
    <property type="expression patterns" value="baseline and differential"/>
</dbReference>
<dbReference type="GO" id="GO:0016324">
    <property type="term" value="C:apical plasma membrane"/>
    <property type="evidence" value="ECO:0000314"/>
    <property type="project" value="ARUK-UCL"/>
</dbReference>
<dbReference type="GO" id="GO:0009925">
    <property type="term" value="C:basal plasma membrane"/>
    <property type="evidence" value="ECO:0000250"/>
    <property type="project" value="ARUK-UCL"/>
</dbReference>
<dbReference type="GO" id="GO:0016323">
    <property type="term" value="C:basolateral plasma membrane"/>
    <property type="evidence" value="ECO:0000314"/>
    <property type="project" value="ARUK-UCL"/>
</dbReference>
<dbReference type="GO" id="GO:0016020">
    <property type="term" value="C:membrane"/>
    <property type="evidence" value="ECO:0007005"/>
    <property type="project" value="UniProtKB"/>
</dbReference>
<dbReference type="GO" id="GO:0005886">
    <property type="term" value="C:plasma membrane"/>
    <property type="evidence" value="ECO:0000314"/>
    <property type="project" value="ARUK-UCL"/>
</dbReference>
<dbReference type="GO" id="GO:0032991">
    <property type="term" value="C:protein-containing complex"/>
    <property type="evidence" value="ECO:0000314"/>
    <property type="project" value="MGI"/>
</dbReference>
<dbReference type="GO" id="GO:0015171">
    <property type="term" value="F:amino acid transmembrane transporter activity"/>
    <property type="evidence" value="ECO:0000314"/>
    <property type="project" value="ARUK-UCL"/>
</dbReference>
<dbReference type="GO" id="GO:0015174">
    <property type="term" value="F:basic amino acid transmembrane transporter activity"/>
    <property type="evidence" value="ECO:0000314"/>
    <property type="project" value="ARUK-UCL"/>
</dbReference>
<dbReference type="GO" id="GO:0061459">
    <property type="term" value="F:L-arginine transmembrane transporter activity"/>
    <property type="evidence" value="ECO:0000314"/>
    <property type="project" value="UniProtKB"/>
</dbReference>
<dbReference type="GO" id="GO:0005290">
    <property type="term" value="F:L-histidine transmembrane transporter activity"/>
    <property type="evidence" value="ECO:0000314"/>
    <property type="project" value="ARUK-UCL"/>
</dbReference>
<dbReference type="GO" id="GO:0015189">
    <property type="term" value="F:L-lysine transmembrane transporter activity"/>
    <property type="evidence" value="ECO:0000314"/>
    <property type="project" value="UniProtKB"/>
</dbReference>
<dbReference type="GO" id="GO:0000064">
    <property type="term" value="F:L-ornithine transmembrane transporter activity"/>
    <property type="evidence" value="ECO:0000250"/>
    <property type="project" value="UniProtKB"/>
</dbReference>
<dbReference type="GO" id="GO:0001618">
    <property type="term" value="F:virus receptor activity"/>
    <property type="evidence" value="ECO:0007669"/>
    <property type="project" value="Ensembl"/>
</dbReference>
<dbReference type="GO" id="GO:0089718">
    <property type="term" value="P:amino acid import across plasma membrane"/>
    <property type="evidence" value="ECO:0000314"/>
    <property type="project" value="ARUK-UCL"/>
</dbReference>
<dbReference type="GO" id="GO:0006865">
    <property type="term" value="P:amino acid transport"/>
    <property type="evidence" value="ECO:0000304"/>
    <property type="project" value="Reactome"/>
</dbReference>
<dbReference type="GO" id="GO:0015807">
    <property type="term" value="P:L-amino acid transport"/>
    <property type="evidence" value="ECO:0000314"/>
    <property type="project" value="ARUK-UCL"/>
</dbReference>
<dbReference type="GO" id="GO:0097638">
    <property type="term" value="P:L-arginine import across plasma membrane"/>
    <property type="evidence" value="ECO:0000250"/>
    <property type="project" value="ARUK-UCL"/>
</dbReference>
<dbReference type="GO" id="GO:1903826">
    <property type="term" value="P:L-arginine transmembrane transport"/>
    <property type="evidence" value="ECO:0000314"/>
    <property type="project" value="UniProtKB"/>
</dbReference>
<dbReference type="GO" id="GO:1903810">
    <property type="term" value="P:L-histidine import across plasma membrane"/>
    <property type="evidence" value="ECO:0000314"/>
    <property type="project" value="ARUK-UCL"/>
</dbReference>
<dbReference type="GO" id="GO:1903352">
    <property type="term" value="P:L-ornithine transmembrane transport"/>
    <property type="evidence" value="ECO:0000250"/>
    <property type="project" value="UniProtKB"/>
</dbReference>
<dbReference type="GO" id="GO:0015819">
    <property type="term" value="P:lysine transport"/>
    <property type="evidence" value="ECO:0000314"/>
    <property type="project" value="ARUK-UCL"/>
</dbReference>
<dbReference type="GO" id="GO:0015822">
    <property type="term" value="P:ornithine transport"/>
    <property type="evidence" value="ECO:0000315"/>
    <property type="project" value="ARUK-UCL"/>
</dbReference>
<dbReference type="GO" id="GO:0042102">
    <property type="term" value="P:positive regulation of T cell proliferation"/>
    <property type="evidence" value="ECO:0000315"/>
    <property type="project" value="ARUK-UCL"/>
</dbReference>
<dbReference type="GO" id="GO:0150104">
    <property type="term" value="P:transport across blood-brain barrier"/>
    <property type="evidence" value="ECO:0000303"/>
    <property type="project" value="ARUK-UCL"/>
</dbReference>
<dbReference type="FunFam" id="1.20.1740.10:FF:000024">
    <property type="entry name" value="High affinity cationic amino acid transporter 1"/>
    <property type="match status" value="1"/>
</dbReference>
<dbReference type="FunFam" id="1.20.1740.10:FF:000009">
    <property type="entry name" value="Low affinity cationic amino acid transporter 2"/>
    <property type="match status" value="1"/>
</dbReference>
<dbReference type="Gene3D" id="1.20.1740.10">
    <property type="entry name" value="Amino acid/polyamine transporter I"/>
    <property type="match status" value="2"/>
</dbReference>
<dbReference type="InterPro" id="IPR002293">
    <property type="entry name" value="AA/rel_permease1"/>
</dbReference>
<dbReference type="InterPro" id="IPR004755">
    <property type="entry name" value="Cat_AA_permease"/>
</dbReference>
<dbReference type="InterPro" id="IPR029485">
    <property type="entry name" value="CAT_C"/>
</dbReference>
<dbReference type="NCBIfam" id="TIGR00906">
    <property type="entry name" value="2A0303"/>
    <property type="match status" value="1"/>
</dbReference>
<dbReference type="PANTHER" id="PTHR43243:SF28">
    <property type="entry name" value="HIGH AFFINITY CATIONIC AMINO ACID TRANSPORTER 1"/>
    <property type="match status" value="1"/>
</dbReference>
<dbReference type="PANTHER" id="PTHR43243">
    <property type="entry name" value="INNER MEMBRANE TRANSPORTER YGJI-RELATED"/>
    <property type="match status" value="1"/>
</dbReference>
<dbReference type="Pfam" id="PF13520">
    <property type="entry name" value="AA_permease_2"/>
    <property type="match status" value="1"/>
</dbReference>
<dbReference type="Pfam" id="PF13906">
    <property type="entry name" value="AA_permease_C"/>
    <property type="match status" value="1"/>
</dbReference>
<dbReference type="PIRSF" id="PIRSF006060">
    <property type="entry name" value="AA_transporter"/>
    <property type="match status" value="1"/>
</dbReference>
<reference key="1">
    <citation type="journal article" date="1991" name="Virology">
        <title>Molecular cloning and characterization of a novel human gene homologous to the murine ecotropic retroviral receptor.</title>
        <authorList>
            <person name="Yoshimoto T."/>
            <person name="Yoshimoto E."/>
            <person name="Meruelo D."/>
        </authorList>
    </citation>
    <scope>NUCLEOTIDE SEQUENCE [MRNA]</scope>
    <scope>TISSUE SPECIFICITY</scope>
</reference>
<reference key="2">
    <citation type="journal article" date="1992" name="Genomics">
        <title>The human cationic amino acid transporter (ATRC1): physical and genetic mapping to 13q12-q14.</title>
        <authorList>
            <person name="Albritton L.M."/>
            <person name="Bowcock A.M."/>
            <person name="Eddy R.L."/>
            <person name="Morton C.C."/>
            <person name="Tseng L."/>
            <person name="Farrer L.A."/>
            <person name="Cavalli-Sforza L.L."/>
            <person name="Shows T.B."/>
            <person name="Cunningham J.M."/>
        </authorList>
    </citation>
    <scope>NUCLEOTIDE SEQUENCE [MRNA]</scope>
    <source>
        <tissue>Urinary bladder</tissue>
    </source>
</reference>
<reference key="3">
    <citation type="journal article" date="1999" name="J. Membr. Biol.">
        <title>Identification of three cationic amino acid transporters in placental trophoblast: cloning, expression, and characterization of hCAT-1.</title>
        <authorList>
            <person name="Kamath S.G."/>
            <person name="Furesz T.C."/>
            <person name="Way B.A."/>
            <person name="Smith C.H."/>
        </authorList>
    </citation>
    <scope>NUCLEOTIDE SEQUENCE [MRNA]</scope>
    <scope>FUNCTION</scope>
    <scope>TRANSPORTER ACTIVITY</scope>
    <scope>BIOPHYSICOCHEMICAL PROPERTIES</scope>
    <source>
        <tissue>Placenta</tissue>
    </source>
</reference>
<reference key="4">
    <citation type="journal article" date="2004" name="Nature">
        <title>The DNA sequence and analysis of human chromosome 13.</title>
        <authorList>
            <person name="Dunham A."/>
            <person name="Matthews L.H."/>
            <person name="Burton J."/>
            <person name="Ashurst J.L."/>
            <person name="Howe K.L."/>
            <person name="Ashcroft K.J."/>
            <person name="Beare D.M."/>
            <person name="Burford D.C."/>
            <person name="Hunt S.E."/>
            <person name="Griffiths-Jones S."/>
            <person name="Jones M.C."/>
            <person name="Keenan S.J."/>
            <person name="Oliver K."/>
            <person name="Scott C.E."/>
            <person name="Ainscough R."/>
            <person name="Almeida J.P."/>
            <person name="Ambrose K.D."/>
            <person name="Andrews D.T."/>
            <person name="Ashwell R.I.S."/>
            <person name="Babbage A.K."/>
            <person name="Bagguley C.L."/>
            <person name="Bailey J."/>
            <person name="Bannerjee R."/>
            <person name="Barlow K.F."/>
            <person name="Bates K."/>
            <person name="Beasley H."/>
            <person name="Bird C.P."/>
            <person name="Bray-Allen S."/>
            <person name="Brown A.J."/>
            <person name="Brown J.Y."/>
            <person name="Burrill W."/>
            <person name="Carder C."/>
            <person name="Carter N.P."/>
            <person name="Chapman J.C."/>
            <person name="Clamp M.E."/>
            <person name="Clark S.Y."/>
            <person name="Clarke G."/>
            <person name="Clee C.M."/>
            <person name="Clegg S.C."/>
            <person name="Cobley V."/>
            <person name="Collins J.E."/>
            <person name="Corby N."/>
            <person name="Coville G.J."/>
            <person name="Deloukas P."/>
            <person name="Dhami P."/>
            <person name="Dunham I."/>
            <person name="Dunn M."/>
            <person name="Earthrowl M.E."/>
            <person name="Ellington A.G."/>
            <person name="Faulkner L."/>
            <person name="Frankish A.G."/>
            <person name="Frankland J."/>
            <person name="French L."/>
            <person name="Garner P."/>
            <person name="Garnett J."/>
            <person name="Gilbert J.G.R."/>
            <person name="Gilson C.J."/>
            <person name="Ghori J."/>
            <person name="Grafham D.V."/>
            <person name="Gribble S.M."/>
            <person name="Griffiths C."/>
            <person name="Hall R.E."/>
            <person name="Hammond S."/>
            <person name="Harley J.L."/>
            <person name="Hart E.A."/>
            <person name="Heath P.D."/>
            <person name="Howden P.J."/>
            <person name="Huckle E.J."/>
            <person name="Hunt P.J."/>
            <person name="Hunt A.R."/>
            <person name="Johnson C."/>
            <person name="Johnson D."/>
            <person name="Kay M."/>
            <person name="Kimberley A.M."/>
            <person name="King A."/>
            <person name="Laird G.K."/>
            <person name="Langford C.J."/>
            <person name="Lawlor S."/>
            <person name="Leongamornlert D.A."/>
            <person name="Lloyd D.M."/>
            <person name="Lloyd C."/>
            <person name="Loveland J.E."/>
            <person name="Lovell J."/>
            <person name="Martin S."/>
            <person name="Mashreghi-Mohammadi M."/>
            <person name="McLaren S.J."/>
            <person name="McMurray A."/>
            <person name="Milne S."/>
            <person name="Moore M.J.F."/>
            <person name="Nickerson T."/>
            <person name="Palmer S.A."/>
            <person name="Pearce A.V."/>
            <person name="Peck A.I."/>
            <person name="Pelan S."/>
            <person name="Phillimore B."/>
            <person name="Porter K.M."/>
            <person name="Rice C.M."/>
            <person name="Searle S."/>
            <person name="Sehra H.K."/>
            <person name="Shownkeen R."/>
            <person name="Skuce C.D."/>
            <person name="Smith M."/>
            <person name="Steward C.A."/>
            <person name="Sycamore N."/>
            <person name="Tester J."/>
            <person name="Thomas D.W."/>
            <person name="Tracey A."/>
            <person name="Tromans A."/>
            <person name="Tubby B."/>
            <person name="Wall M."/>
            <person name="Wallis J.M."/>
            <person name="West A.P."/>
            <person name="Whitehead S.L."/>
            <person name="Willey D.L."/>
            <person name="Wilming L."/>
            <person name="Wray P.W."/>
            <person name="Wright M.W."/>
            <person name="Young L."/>
            <person name="Coulson A."/>
            <person name="Durbin R.M."/>
            <person name="Hubbard T."/>
            <person name="Sulston J.E."/>
            <person name="Beck S."/>
            <person name="Bentley D.R."/>
            <person name="Rogers J."/>
            <person name="Ross M.T."/>
        </authorList>
    </citation>
    <scope>NUCLEOTIDE SEQUENCE [LARGE SCALE GENOMIC DNA]</scope>
</reference>
<reference key="5">
    <citation type="journal article" date="2004" name="Genome Res.">
        <title>The status, quality, and expansion of the NIH full-length cDNA project: the Mammalian Gene Collection (MGC).</title>
        <authorList>
            <consortium name="The MGC Project Team"/>
        </authorList>
    </citation>
    <scope>NUCLEOTIDE SEQUENCE [LARGE SCALE MRNA]</scope>
    <source>
        <tissue>Placenta</tissue>
    </source>
</reference>
<reference key="6">
    <citation type="journal article" date="1997" name="Biochemistry">
        <title>Human cationic amino acid transporters hCAT-1, hCAT-2A, and hCAT-2B: three related carriers with distinct transport properties.</title>
        <authorList>
            <person name="Closs E.I."/>
            <person name="Graef P."/>
            <person name="Habermeier A."/>
            <person name="Cunningham J.M."/>
            <person name="Foerstermann U."/>
        </authorList>
    </citation>
    <scope>FUNCTION</scope>
    <scope>TRANSPORTER ACTIVITY</scope>
    <scope>BIOPHYSICOCHEMICAL PROPERTIES</scope>
    <source>
        <tissue>Liver</tissue>
    </source>
</reference>
<reference key="7">
    <citation type="submission" date="2005-06" db="UniProtKB">
        <authorList>
            <person name="Bienvenut W.V."/>
        </authorList>
    </citation>
    <scope>PROTEIN SEQUENCE OF 5-15; 131-142 AND 361-373</scope>
    <scope>IDENTIFICATION BY MASS SPECTROMETRY</scope>
    <source>
        <tissue>B-cell lymphoma</tissue>
    </source>
</reference>
<reference key="8">
    <citation type="journal article" date="2009" name="Nat. Biotechnol.">
        <title>Mass-spectrometric identification and relative quantification of N-linked cell surface glycoproteins.</title>
        <authorList>
            <person name="Wollscheid B."/>
            <person name="Bausch-Fluck D."/>
            <person name="Henderson C."/>
            <person name="O'Brien R."/>
            <person name="Bibel M."/>
            <person name="Schiess R."/>
            <person name="Aebersold R."/>
            <person name="Watts J.D."/>
        </authorList>
    </citation>
    <scope>GLYCOSYLATION [LARGE SCALE ANALYSIS] AT ASN-226</scope>
    <source>
        <tissue>Leukemic T-cell</tissue>
    </source>
</reference>
<reference key="9">
    <citation type="journal article" date="2019" name="Cell Metab.">
        <title>Transmembrane 4 L six family member 5 senses arginine for mTORC1 signaling.</title>
        <authorList>
            <person name="Jung J.W."/>
            <person name="Macalino S.J.Y."/>
            <person name="Cui M."/>
            <person name="Kim J.E."/>
            <person name="Kim H.J."/>
            <person name="Song D.G."/>
            <person name="Nam S.H."/>
            <person name="Kim S."/>
            <person name="Choi S."/>
            <person name="Lee J.W."/>
        </authorList>
    </citation>
    <scope>INTERACTION WITH TM4SF5</scope>
</reference>
<feature type="chain" id="PRO_0000054261" description="High affinity cationic amino acid transporter 1">
    <location>
        <begin position="1"/>
        <end position="629"/>
    </location>
</feature>
<feature type="topological domain" description="Cytoplasmic" evidence="2">
    <location>
        <begin position="1"/>
        <end position="35"/>
    </location>
</feature>
<feature type="transmembrane region" description="Helical" evidence="2">
    <location>
        <begin position="36"/>
        <end position="57"/>
    </location>
</feature>
<feature type="topological domain" description="Extracellular" evidence="2">
    <location>
        <begin position="58"/>
        <end position="61"/>
    </location>
</feature>
<feature type="transmembrane region" description="Helical" evidence="2">
    <location>
        <begin position="62"/>
        <end position="82"/>
    </location>
</feature>
<feature type="topological domain" description="Cytoplasmic" evidence="2">
    <location>
        <begin position="83"/>
        <end position="102"/>
    </location>
</feature>
<feature type="transmembrane region" description="Helical" evidence="2">
    <location>
        <begin position="103"/>
        <end position="123"/>
    </location>
</feature>
<feature type="topological domain" description="Extracellular" evidence="2">
    <location>
        <begin position="124"/>
        <end position="162"/>
    </location>
</feature>
<feature type="transmembrane region" description="Helical" evidence="2">
    <location>
        <begin position="163"/>
        <end position="183"/>
    </location>
</feature>
<feature type="topological domain" description="Cytoplasmic" evidence="2">
    <location>
        <begin position="184"/>
        <end position="191"/>
    </location>
</feature>
<feature type="transmembrane region" description="Helical" evidence="2">
    <location>
        <begin position="192"/>
        <end position="212"/>
    </location>
</feature>
<feature type="topological domain" description="Extracellular" evidence="2">
    <location>
        <begin position="213"/>
        <end position="246"/>
    </location>
</feature>
<feature type="transmembrane region" description="Helical" evidence="2">
    <location>
        <begin position="247"/>
        <end position="267"/>
    </location>
</feature>
<feature type="topological domain" description="Cytoplasmic" evidence="2">
    <location>
        <begin position="268"/>
        <end position="287"/>
    </location>
</feature>
<feature type="transmembrane region" description="Helical" evidence="2">
    <location>
        <begin position="288"/>
        <end position="307"/>
    </location>
</feature>
<feature type="topological domain" description="Extracellular" evidence="2">
    <location>
        <begin position="308"/>
        <end position="337"/>
    </location>
</feature>
<feature type="transmembrane region" description="Helical" evidence="2">
    <location>
        <begin position="338"/>
        <end position="358"/>
    </location>
</feature>
<feature type="topological domain" description="Cytoplasmic" evidence="2">
    <location>
        <begin position="359"/>
        <end position="384"/>
    </location>
</feature>
<feature type="transmembrane region" description="Helical" evidence="2">
    <location>
        <begin position="385"/>
        <end position="405"/>
    </location>
</feature>
<feature type="topological domain" description="Extracellular" evidence="2">
    <location>
        <begin position="406"/>
        <end position="408"/>
    </location>
</feature>
<feature type="transmembrane region" description="Helical" evidence="2">
    <location>
        <begin position="409"/>
        <end position="429"/>
    </location>
</feature>
<feature type="topological domain" description="Cytoplasmic" evidence="2">
    <location>
        <begin position="430"/>
        <end position="492"/>
    </location>
</feature>
<feature type="transmembrane region" description="Helical" evidence="2">
    <location>
        <begin position="493"/>
        <end position="513"/>
    </location>
</feature>
<feature type="topological domain" description="Extracellular" evidence="2">
    <location>
        <begin position="514"/>
        <end position="526"/>
    </location>
</feature>
<feature type="transmembrane region" description="Helical" evidence="2">
    <location>
        <begin position="527"/>
        <end position="551"/>
    </location>
</feature>
<feature type="topological domain" description="Cytoplasmic" evidence="2">
    <location>
        <begin position="552"/>
        <end position="559"/>
    </location>
</feature>
<feature type="transmembrane region" description="Helical" evidence="2">
    <location>
        <begin position="560"/>
        <end position="580"/>
    </location>
</feature>
<feature type="topological domain" description="Extracellular" evidence="2">
    <location>
        <begin position="581"/>
        <end position="584"/>
    </location>
</feature>
<feature type="transmembrane region" description="Helical" evidence="2">
    <location>
        <begin position="585"/>
        <end position="605"/>
    </location>
</feature>
<feature type="topological domain" description="Cytoplasmic" evidence="2">
    <location>
        <begin position="606"/>
        <end position="629"/>
    </location>
</feature>
<feature type="glycosylation site" description="N-linked (GlcNAc...) asparagine" evidence="5">
    <location>
        <position position="226"/>
    </location>
</feature>
<feature type="glycosylation site" description="N-linked (GlcNAc...) asparagine" evidence="2">
    <location>
        <position position="235"/>
    </location>
</feature>
<feature type="sequence conflict" description="In Ref. 2; CAA40560." evidence="10" ref="2">
    <original>R</original>
    <variation>P</variation>
    <location>
        <position position="23"/>
    </location>
</feature>
<gene>
    <name evidence="11" type="primary">SLC7A1</name>
    <name evidence="9" type="synonym">ATRC1</name>
    <name evidence="11" type="synonym">ERR</name>
    <name type="synonym">REC1L</name>
</gene>
<protein>
    <recommendedName>
        <fullName>High affinity cationic amino acid transporter 1</fullName>
        <shortName evidence="8">CAT-1</shortName>
        <shortName>CAT1</shortName>
    </recommendedName>
    <alternativeName>
        <fullName>Ecotropic retroviral leukemia receptor homolog</fullName>
    </alternativeName>
    <alternativeName>
        <fullName>Ecotropic retrovirus receptor homolog</fullName>
    </alternativeName>
    <alternativeName>
        <fullName evidence="11">Solute carrier family 7 member 1</fullName>
    </alternativeName>
    <alternativeName>
        <fullName>System Y+ basic amino acid transporter</fullName>
    </alternativeName>
</protein>
<evidence type="ECO:0000250" key="1">
    <source>
        <dbReference type="UniProtKB" id="Q09143"/>
    </source>
</evidence>
<evidence type="ECO:0000255" key="2"/>
<evidence type="ECO:0000269" key="3">
    <source>
    </source>
</evidence>
<evidence type="ECO:0000269" key="4">
    <source>
    </source>
</evidence>
<evidence type="ECO:0000269" key="5">
    <source>
    </source>
</evidence>
<evidence type="ECO:0000269" key="6">
    <source>
    </source>
</evidence>
<evidence type="ECO:0000269" key="7">
    <source>
    </source>
</evidence>
<evidence type="ECO:0000303" key="8">
    <source>
    </source>
</evidence>
<evidence type="ECO:0000303" key="9">
    <source>
    </source>
</evidence>
<evidence type="ECO:0000305" key="10"/>
<evidence type="ECO:0000312" key="11">
    <source>
        <dbReference type="HGNC" id="HGNC:11057"/>
    </source>
</evidence>
<organism>
    <name type="scientific">Homo sapiens</name>
    <name type="common">Human</name>
    <dbReference type="NCBI Taxonomy" id="9606"/>
    <lineage>
        <taxon>Eukaryota</taxon>
        <taxon>Metazoa</taxon>
        <taxon>Chordata</taxon>
        <taxon>Craniata</taxon>
        <taxon>Vertebrata</taxon>
        <taxon>Euteleostomi</taxon>
        <taxon>Mammalia</taxon>
        <taxon>Eutheria</taxon>
        <taxon>Euarchontoglires</taxon>
        <taxon>Primates</taxon>
        <taxon>Haplorrhini</taxon>
        <taxon>Catarrhini</taxon>
        <taxon>Hominidae</taxon>
        <taxon>Homo</taxon>
    </lineage>
</organism>
<proteinExistence type="evidence at protein level"/>